<protein>
    <recommendedName>
        <fullName>Homeobox protein Hox-C6</fullName>
    </recommendedName>
    <alternativeName>
        <fullName>Homeobox protein Hox-3.3</fullName>
    </alternativeName>
    <alternativeName>
        <fullName>Homeobox protein Hox-6.1</fullName>
    </alternativeName>
</protein>
<comment type="function">
    <text>Sequence-specific transcription factor which is part of a developmental regulatory system that provides cells with specific positional identities on the anterior-posterior axis.</text>
</comment>
<comment type="subcellular location">
    <subcellularLocation>
        <location>Nucleus</location>
    </subcellularLocation>
</comment>
<comment type="alternative products">
    <event type="alternative splicing"/>
    <isoform>
        <id>P10629-1</id>
        <name>PRII</name>
        <sequence type="displayed"/>
    </isoform>
    <isoform>
        <id>P10629-2</id>
        <name>PRI</name>
        <sequence type="described" ref="VSP_002393"/>
    </isoform>
</comment>
<comment type="similarity">
    <text evidence="3">Belongs to the Antp homeobox family.</text>
</comment>
<gene>
    <name type="primary">Hoxc6</name>
    <name type="synonym">Hox-3.3</name>
    <name type="synonym">Hoxc-6</name>
</gene>
<name>HXC6_MOUSE</name>
<evidence type="ECO:0000255" key="1">
    <source>
        <dbReference type="PROSITE-ProRule" id="PRU00108"/>
    </source>
</evidence>
<evidence type="ECO:0000256" key="2">
    <source>
        <dbReference type="SAM" id="MobiDB-lite"/>
    </source>
</evidence>
<evidence type="ECO:0000305" key="3"/>
<keyword id="KW-0025">Alternative splicing</keyword>
<keyword id="KW-0217">Developmental protein</keyword>
<keyword id="KW-0238">DNA-binding</keyword>
<keyword id="KW-0371">Homeobox</keyword>
<keyword id="KW-0539">Nucleus</keyword>
<keyword id="KW-1185">Reference proteome</keyword>
<keyword id="KW-0804">Transcription</keyword>
<keyword id="KW-0805">Transcription regulation</keyword>
<organism>
    <name type="scientific">Mus musculus</name>
    <name type="common">Mouse</name>
    <dbReference type="NCBI Taxonomy" id="10090"/>
    <lineage>
        <taxon>Eukaryota</taxon>
        <taxon>Metazoa</taxon>
        <taxon>Chordata</taxon>
        <taxon>Craniata</taxon>
        <taxon>Vertebrata</taxon>
        <taxon>Euteleostomi</taxon>
        <taxon>Mammalia</taxon>
        <taxon>Eutheria</taxon>
        <taxon>Euarchontoglires</taxon>
        <taxon>Glires</taxon>
        <taxon>Rodentia</taxon>
        <taxon>Myomorpha</taxon>
        <taxon>Muroidea</taxon>
        <taxon>Muridae</taxon>
        <taxon>Murinae</taxon>
        <taxon>Mus</taxon>
        <taxon>Mus</taxon>
    </lineage>
</organism>
<accession>P10629</accession>
<accession>Q61683</accession>
<proteinExistence type="evidence at transcript level"/>
<dbReference type="EMBL" id="J03074">
    <property type="protein sequence ID" value="AAA37832.1"/>
    <property type="molecule type" value="mRNA"/>
</dbReference>
<dbReference type="EMBL" id="M35986">
    <property type="protein sequence ID" value="AAA37854.1"/>
    <property type="molecule type" value="mRNA"/>
</dbReference>
<dbReference type="EMBL" id="X16511">
    <property type="protein sequence ID" value="CAA34518.1"/>
    <property type="molecule type" value="mRNA"/>
</dbReference>
<dbReference type="EMBL" id="X16510">
    <property type="protein sequence ID" value="CAA34517.1"/>
    <property type="molecule type" value="mRNA"/>
</dbReference>
<dbReference type="EMBL" id="S74185">
    <property type="protein sequence ID" value="AAB20717.1"/>
    <property type="molecule type" value="Unassigned_DNA"/>
</dbReference>
<dbReference type="EMBL" id="X12504">
    <property type="protein sequence ID" value="CAA31022.1"/>
    <property type="molecule type" value="mRNA"/>
</dbReference>
<dbReference type="EMBL" id="X12504">
    <property type="protein sequence ID" value="CAA31023.1"/>
    <property type="molecule type" value="mRNA"/>
</dbReference>
<dbReference type="EMBL" id="X16838">
    <property type="protein sequence ID" value="CAA34737.1"/>
    <property type="molecule type" value="mRNA"/>
</dbReference>
<dbReference type="CCDS" id="CCDS27895.1">
    <molecule id="P10629-1"/>
</dbReference>
<dbReference type="PIR" id="A32167">
    <property type="entry name" value="A32167"/>
</dbReference>
<dbReference type="PIR" id="A56568">
    <property type="entry name" value="A56568"/>
</dbReference>
<dbReference type="PIR" id="S00987">
    <property type="entry name" value="WJMSX6"/>
</dbReference>
<dbReference type="RefSeq" id="NP_034595.2">
    <molecule id="P10629-1"/>
    <property type="nucleotide sequence ID" value="NM_010465.2"/>
</dbReference>
<dbReference type="RefSeq" id="XP_006520532.1">
    <molecule id="P10629-2"/>
    <property type="nucleotide sequence ID" value="XM_006520469.2"/>
</dbReference>
<dbReference type="SMR" id="P10629"/>
<dbReference type="BioGRID" id="200388">
    <property type="interactions" value="1"/>
</dbReference>
<dbReference type="FunCoup" id="P10629">
    <property type="interactions" value="2060"/>
</dbReference>
<dbReference type="IntAct" id="P10629">
    <property type="interactions" value="1"/>
</dbReference>
<dbReference type="STRING" id="10090.ENSMUSP00000001711"/>
<dbReference type="iPTMnet" id="P10629"/>
<dbReference type="PhosphoSitePlus" id="P10629"/>
<dbReference type="PaxDb" id="10090-ENSMUSP00000001711"/>
<dbReference type="ProteomicsDB" id="267023">
    <molecule id="P10629-1"/>
</dbReference>
<dbReference type="ProteomicsDB" id="267024">
    <molecule id="P10629-2"/>
</dbReference>
<dbReference type="Antibodypedia" id="15318">
    <property type="antibodies" value="251 antibodies from 30 providers"/>
</dbReference>
<dbReference type="DNASU" id="15425"/>
<dbReference type="Ensembl" id="ENSMUST00000001711.6">
    <molecule id="P10629-1"/>
    <property type="protein sequence ID" value="ENSMUSP00000001711.5"/>
    <property type="gene ID" value="ENSMUSG00000001661.6"/>
</dbReference>
<dbReference type="GeneID" id="15425"/>
<dbReference type="KEGG" id="mmu:15425"/>
<dbReference type="UCSC" id="uc007xxc.1">
    <molecule id="P10629-1"/>
    <property type="organism name" value="mouse"/>
</dbReference>
<dbReference type="AGR" id="MGI:96197"/>
<dbReference type="CTD" id="3223"/>
<dbReference type="MGI" id="MGI:96197">
    <property type="gene designation" value="Hoxc6"/>
</dbReference>
<dbReference type="VEuPathDB" id="HostDB:ENSMUSG00000001661"/>
<dbReference type="eggNOG" id="KOG0489">
    <property type="taxonomic scope" value="Eukaryota"/>
</dbReference>
<dbReference type="GeneTree" id="ENSGT00940000159254"/>
<dbReference type="HOGENOM" id="CLU_061398_1_1_1"/>
<dbReference type="InParanoid" id="P10629"/>
<dbReference type="OMA" id="CHLTGGQ"/>
<dbReference type="OrthoDB" id="6159439at2759"/>
<dbReference type="PhylomeDB" id="P10629"/>
<dbReference type="TreeFam" id="TF316310"/>
<dbReference type="BioGRID-ORCS" id="15425">
    <property type="hits" value="3 hits in 80 CRISPR screens"/>
</dbReference>
<dbReference type="ChiTaRS" id="Hoxc6">
    <property type="organism name" value="mouse"/>
</dbReference>
<dbReference type="PRO" id="PR:P10629"/>
<dbReference type="Proteomes" id="UP000000589">
    <property type="component" value="Chromosome 15"/>
</dbReference>
<dbReference type="RNAct" id="P10629">
    <property type="molecule type" value="protein"/>
</dbReference>
<dbReference type="Bgee" id="ENSMUSG00000001661">
    <property type="expression patterns" value="Expressed in embryonic post-anal tail and 97 other cell types or tissues"/>
</dbReference>
<dbReference type="ExpressionAtlas" id="P10629">
    <property type="expression patterns" value="baseline and differential"/>
</dbReference>
<dbReference type="GO" id="GO:0005829">
    <property type="term" value="C:cytosol"/>
    <property type="evidence" value="ECO:0007669"/>
    <property type="project" value="Ensembl"/>
</dbReference>
<dbReference type="GO" id="GO:0005654">
    <property type="term" value="C:nucleoplasm"/>
    <property type="evidence" value="ECO:0007669"/>
    <property type="project" value="Ensembl"/>
</dbReference>
<dbReference type="GO" id="GO:0003677">
    <property type="term" value="F:DNA binding"/>
    <property type="evidence" value="ECO:0007669"/>
    <property type="project" value="UniProtKB-KW"/>
</dbReference>
<dbReference type="GO" id="GO:0000981">
    <property type="term" value="F:DNA-binding transcription factor activity, RNA polymerase II-specific"/>
    <property type="evidence" value="ECO:0007669"/>
    <property type="project" value="InterPro"/>
</dbReference>
<dbReference type="GO" id="GO:0009952">
    <property type="term" value="P:anterior/posterior pattern specification"/>
    <property type="evidence" value="ECO:0000316"/>
    <property type="project" value="MGI"/>
</dbReference>
<dbReference type="GO" id="GO:0048706">
    <property type="term" value="P:embryonic skeletal system development"/>
    <property type="evidence" value="ECO:0000316"/>
    <property type="project" value="MGI"/>
</dbReference>
<dbReference type="CDD" id="cd00086">
    <property type="entry name" value="homeodomain"/>
    <property type="match status" value="1"/>
</dbReference>
<dbReference type="FunFam" id="1.10.10.60:FF:000879">
    <property type="match status" value="1"/>
</dbReference>
<dbReference type="Gene3D" id="1.10.10.60">
    <property type="entry name" value="Homeodomain-like"/>
    <property type="match status" value="1"/>
</dbReference>
<dbReference type="InterPro" id="IPR050296">
    <property type="entry name" value="Antp_homeobox"/>
</dbReference>
<dbReference type="InterPro" id="IPR001356">
    <property type="entry name" value="HD"/>
</dbReference>
<dbReference type="InterPro" id="IPR020479">
    <property type="entry name" value="HD_metazoa"/>
</dbReference>
<dbReference type="InterPro" id="IPR001827">
    <property type="entry name" value="Homeobox_Antennapedia_CS"/>
</dbReference>
<dbReference type="InterPro" id="IPR017970">
    <property type="entry name" value="Homeobox_CS"/>
</dbReference>
<dbReference type="InterPro" id="IPR009057">
    <property type="entry name" value="Homeodomain-like_sf"/>
</dbReference>
<dbReference type="PANTHER" id="PTHR45659">
    <property type="entry name" value="HOMEOBOX PROTEIN HOX"/>
    <property type="match status" value="1"/>
</dbReference>
<dbReference type="PANTHER" id="PTHR45659:SF1">
    <property type="entry name" value="HOMEOBOX PROTEIN HOX-C6"/>
    <property type="match status" value="1"/>
</dbReference>
<dbReference type="Pfam" id="PF00046">
    <property type="entry name" value="Homeodomain"/>
    <property type="match status" value="1"/>
</dbReference>
<dbReference type="PRINTS" id="PR00024">
    <property type="entry name" value="HOMEOBOX"/>
</dbReference>
<dbReference type="SMART" id="SM00389">
    <property type="entry name" value="HOX"/>
    <property type="match status" value="1"/>
</dbReference>
<dbReference type="SUPFAM" id="SSF46689">
    <property type="entry name" value="Homeodomain-like"/>
    <property type="match status" value="1"/>
</dbReference>
<dbReference type="PROSITE" id="PS00032">
    <property type="entry name" value="ANTENNAPEDIA"/>
    <property type="match status" value="1"/>
</dbReference>
<dbReference type="PROSITE" id="PS00027">
    <property type="entry name" value="HOMEOBOX_1"/>
    <property type="match status" value="1"/>
</dbReference>
<dbReference type="PROSITE" id="PS50071">
    <property type="entry name" value="HOMEOBOX_2"/>
    <property type="match status" value="1"/>
</dbReference>
<feature type="chain" id="PRO_0000200175" description="Homeobox protein Hox-C6">
    <location>
        <begin position="1"/>
        <end position="235"/>
    </location>
</feature>
<feature type="DNA-binding region" description="Homeobox" evidence="1">
    <location>
        <begin position="141"/>
        <end position="200"/>
    </location>
</feature>
<feature type="region of interest" description="Disordered" evidence="2">
    <location>
        <begin position="200"/>
        <end position="235"/>
    </location>
</feature>
<feature type="short sequence motif" description="Antp-type hexapeptide">
    <location>
        <begin position="122"/>
        <end position="127"/>
    </location>
</feature>
<feature type="compositionally biased region" description="Basic and acidic residues" evidence="2">
    <location>
        <begin position="219"/>
        <end position="235"/>
    </location>
</feature>
<feature type="splice variant" id="VSP_002393" description="In isoform PRI." evidence="3">
    <location>
        <begin position="1"/>
        <end position="82"/>
    </location>
</feature>
<feature type="sequence conflict" description="In Ref. 3; CAA31022." evidence="3" ref="3">
    <original>AGGQ</original>
    <variation>QQRP</variation>
    <location>
        <begin position="15"/>
        <end position="18"/>
    </location>
</feature>
<feature type="sequence conflict" description="In Ref. 4; AAA37854/CAA34737." evidence="3" ref="4">
    <original>S</original>
    <variation>N</variation>
    <location>
        <position position="131"/>
    </location>
</feature>
<feature type="sequence conflict" description="In Ref. 4; AAA37854/CAA34737." evidence="3" ref="4">
    <original>R</original>
    <variation>A</variation>
    <location>
        <position position="192"/>
    </location>
</feature>
<feature type="sequence conflict" description="In Ref. 1 and 2." evidence="3" ref="1 2">
    <original>TE</original>
    <variation>QK</variation>
    <location>
        <begin position="228"/>
        <end position="229"/>
    </location>
</feature>
<sequence>MNSYFTNPSLSCHLAGGQDVLPNVALNSTAYDPVRHFSTYGAAVAQNRIYSTPFYSPQENVVFSSSRGPYDYGSNSFYQEKDMLSNCRQNTLGHNTQTSIAQDFSSEQGRTAPQDQKASIQIYPWMQRMNSHSGVGYGADRRRGRQIYSRYQTLELEKEFHFNRYLTRRRRIEIANALCLTERQIKIWFQNRRMKWKKESNLTSTLSGGGGGATADSLGGKEEKREETEEEKQKE</sequence>
<reference key="1">
    <citation type="journal article" date="1993" name="J. Anat.">
        <title>Spatial localisation of transcripts of the Hox-C6 gene.</title>
        <authorList>
            <person name="Shimeld S.M."/>
            <person name="Gaunt S.J."/>
            <person name="Coletta P.L."/>
            <person name="Geada A.M."/>
            <person name="Sharpe P.T."/>
        </authorList>
    </citation>
    <scope>NUCLEOTIDE SEQUENCE [MRNA]</scope>
</reference>
<reference key="2">
    <citation type="journal article" date="1991" name="Mech. Dev.">
        <title>Characterisation of the murine Hox-3.3 gene and its promoter.</title>
        <authorList>
            <person name="Coletta P.L."/>
            <person name="Shimeld S.M."/>
            <person name="Chaudhuri C."/>
            <person name="Mueller U."/>
            <person name="Clarke J.P."/>
            <person name="Sharpe P.T."/>
        </authorList>
    </citation>
    <scope>NUCLEOTIDE SEQUENCE</scope>
</reference>
<reference key="3">
    <citation type="journal article" date="1988" name="EMBO J.">
        <title>Expression of multiple homeobox genes within diverse mammalian haemopoietic lineages.</title>
        <authorList>
            <person name="Kongsuwan K."/>
            <person name="Webb E."/>
            <person name="Housiaux P."/>
            <person name="Adams J.M."/>
        </authorList>
    </citation>
    <scope>NUCLEOTIDE SEQUENCE [GENOMIC DNA] OF 15-235</scope>
    <source>
        <tissue>Bone marrow</tissue>
        <tissue>Spleen</tissue>
    </source>
</reference>
<reference key="4">
    <citation type="journal article" date="1988" name="Development">
        <title>Isolation and expression of a new mouse homeobox gene.</title>
        <authorList>
            <person name="Sharpe P.T."/>
            <person name="Miller J.R."/>
            <person name="Evans E.P."/>
            <person name="Burtenshaw M.D."/>
            <person name="Gaunt S.J."/>
        </authorList>
    </citation>
    <scope>NUCLEOTIDE SEQUENCE [GENOMIC DNA] OF 131-235</scope>
    <source>
        <tissue>Kidney</tissue>
    </source>
</reference>
<reference key="5">
    <citation type="journal article" date="1989" name="Genomics">
        <title>Isolation and regional localization of the murine homeobox-containing gene Hox-3.3 to mouse chromosome region 15E.</title>
        <authorList>
            <person name="Schughart K."/>
            <person name="Pravtcheva D."/>
            <person name="Newman M.S."/>
            <person name="Hunihan L.W."/>
            <person name="Jiang Z."/>
            <person name="Ruddle F.H."/>
        </authorList>
    </citation>
    <scope>NUCLEOTIDE SEQUENCE [MRNA] OF 133-235</scope>
</reference>